<accession>O94903</accession>
<accession>Q6FI94</accession>
<feature type="chain" id="PRO_0000163210" description="Pyridoxal phosphate homeostasis protein">
    <location>
        <begin position="1"/>
        <end position="275"/>
    </location>
</feature>
<feature type="region of interest" description="Disordered" evidence="3">
    <location>
        <begin position="251"/>
        <end position="275"/>
    </location>
</feature>
<feature type="compositionally biased region" description="Basic and acidic residues" evidence="3">
    <location>
        <begin position="251"/>
        <end position="263"/>
    </location>
</feature>
<feature type="modified residue" description="Phosphoserine" evidence="6">
    <location>
        <position position="6"/>
    </location>
</feature>
<feature type="modified residue" description="N6-(pyridoxal phosphate)lysine" evidence="2">
    <location>
        <position position="47"/>
    </location>
</feature>
<feature type="modified residue" description="Phosphotyrosine" evidence="1">
    <location>
        <position position="69"/>
    </location>
</feature>
<feature type="modified residue" description="N6-succinyllysine" evidence="1">
    <location>
        <position position="125"/>
    </location>
</feature>
<feature type="modified residue" description="Phosphoserine" evidence="7">
    <location>
        <position position="226"/>
    </location>
</feature>
<feature type="modified residue" description="Phosphoserine" evidence="6 7">
    <location>
        <position position="244"/>
    </location>
</feature>
<feature type="sequence variant" id="VAR_052476" description="In dbSNP:rs35423325.">
    <original>V</original>
    <variation>M</variation>
    <location>
        <position position="24"/>
    </location>
</feature>
<feature type="sequence variant" id="VAR_078004" description="In EPEO1." evidence="4">
    <location>
        <begin position="71"/>
        <end position="275"/>
    </location>
</feature>
<feature type="sequence variant" id="VAR_078005" description="In EPEO1; decreased expression at the mRNA level; undetectable at the protein level in patient's fibroblasts." evidence="4">
    <location>
        <begin position="78"/>
        <end position="275"/>
    </location>
</feature>
<feature type="sequence variant" id="VAR_078006" description="In EPEO1; dbSNP:rs755946598." evidence="4">
    <original>P</original>
    <variation>L</variation>
    <location>
        <position position="87"/>
    </location>
</feature>
<feature type="sequence variant" id="VAR_078007" description="In EPEO1; decreased expression at the mRNA level; undetectable at the protein level in patient's fibroblasts; dbSNP:rs752753379." evidence="4">
    <original>L</original>
    <variation>P</variation>
    <location>
        <position position="175"/>
    </location>
</feature>
<feature type="sequence variant" id="VAR_078008" description="In EPEO1; dbSNP:rs760609867." evidence="4">
    <original>R</original>
    <variation>Q</variation>
    <location>
        <position position="241"/>
    </location>
</feature>
<comment type="function">
    <text evidence="2 4">Pyridoxal 5'-phosphate (PLP)-binding protein, which may be involved in intracellular homeostatic regulation of pyridoxal 5'-phosphate (PLP), the active form of vitamin B6.</text>
</comment>
<comment type="tissue specificity">
    <text>Ubiquitous.</text>
</comment>
<comment type="disease" evidence="4">
    <disease id="DI-04934">
        <name>Epilepsy, early-onset, 1, vitamin B6-dependent</name>
        <acronym>EPEO1</acronym>
        <description>An autosomal recessive neurologic disorder characterized by seizures responsive to treatment with activated vitamin B6 and/or pyridoxine. Most patients show delayed psychomotor development, intellectual disability and learning disability. Seizures onset is in the first days or months of life.</description>
        <dbReference type="MIM" id="617290"/>
    </disease>
    <text>The disease is caused by variants affecting the gene represented in this entry.</text>
</comment>
<comment type="similarity">
    <text evidence="2">Belongs to the pyridoxal phosphate-binding protein YggS/PROSC family.</text>
</comment>
<keyword id="KW-0225">Disease variant</keyword>
<keyword id="KW-0887">Epilepsy</keyword>
<keyword id="KW-0597">Phosphoprotein</keyword>
<keyword id="KW-1267">Proteomics identification</keyword>
<keyword id="KW-0663">Pyridoxal phosphate</keyword>
<keyword id="KW-1185">Reference proteome</keyword>
<evidence type="ECO:0000250" key="1">
    <source>
        <dbReference type="UniProtKB" id="Q9Z2Y8"/>
    </source>
</evidence>
<evidence type="ECO:0000255" key="2">
    <source>
        <dbReference type="HAMAP-Rule" id="MF_03225"/>
    </source>
</evidence>
<evidence type="ECO:0000256" key="3">
    <source>
        <dbReference type="SAM" id="MobiDB-lite"/>
    </source>
</evidence>
<evidence type="ECO:0000269" key="4">
    <source>
    </source>
</evidence>
<evidence type="ECO:0000312" key="5">
    <source>
        <dbReference type="HGNC" id="HGNC:9457"/>
    </source>
</evidence>
<evidence type="ECO:0007744" key="6">
    <source>
    </source>
</evidence>
<evidence type="ECO:0007744" key="7">
    <source>
    </source>
</evidence>
<dbReference type="EMBL" id="AB018566">
    <property type="protein sequence ID" value="BAA36842.1"/>
    <property type="molecule type" value="Genomic_DNA"/>
</dbReference>
<dbReference type="EMBL" id="AL136616">
    <property type="protein sequence ID" value="CAB66551.1"/>
    <property type="molecule type" value="mRNA"/>
</dbReference>
<dbReference type="EMBL" id="CR533532">
    <property type="protein sequence ID" value="CAG38563.1"/>
    <property type="molecule type" value="mRNA"/>
</dbReference>
<dbReference type="EMBL" id="BC012334">
    <property type="protein sequence ID" value="AAH12334.1"/>
    <property type="molecule type" value="mRNA"/>
</dbReference>
<dbReference type="CCDS" id="CCDS6096.1"/>
<dbReference type="RefSeq" id="NP_009129.1">
    <property type="nucleotide sequence ID" value="NM_007198.4"/>
</dbReference>
<dbReference type="SMR" id="O94903"/>
<dbReference type="BioGRID" id="116381">
    <property type="interactions" value="128"/>
</dbReference>
<dbReference type="FunCoup" id="O94903">
    <property type="interactions" value="2143"/>
</dbReference>
<dbReference type="IntAct" id="O94903">
    <property type="interactions" value="41"/>
</dbReference>
<dbReference type="MINT" id="O94903"/>
<dbReference type="STRING" id="9606.ENSP00000333551"/>
<dbReference type="DrugBank" id="DB00172">
    <property type="generic name" value="Proline"/>
</dbReference>
<dbReference type="DrugBank" id="DB00114">
    <property type="generic name" value="Pyridoxal phosphate"/>
</dbReference>
<dbReference type="GlyGen" id="O94903">
    <property type="glycosylation" value="1 site, 1 O-linked glycan (1 site)"/>
</dbReference>
<dbReference type="iPTMnet" id="O94903"/>
<dbReference type="MetOSite" id="O94903"/>
<dbReference type="PhosphoSitePlus" id="O94903"/>
<dbReference type="BioMuta" id="PLPBP"/>
<dbReference type="jPOST" id="O94903"/>
<dbReference type="MassIVE" id="O94903"/>
<dbReference type="PaxDb" id="9606-ENSP00000333551"/>
<dbReference type="PeptideAtlas" id="O94903"/>
<dbReference type="ProteomicsDB" id="50537"/>
<dbReference type="Pumba" id="O94903"/>
<dbReference type="Antibodypedia" id="4465">
    <property type="antibodies" value="293 antibodies from 24 providers"/>
</dbReference>
<dbReference type="DNASU" id="11212"/>
<dbReference type="Ensembl" id="ENST00000328195.8">
    <property type="protein sequence ID" value="ENSP00000333551.3"/>
    <property type="gene ID" value="ENSG00000147471.12"/>
</dbReference>
<dbReference type="GeneID" id="11212"/>
<dbReference type="KEGG" id="hsa:11212"/>
<dbReference type="MANE-Select" id="ENST00000328195.8">
    <property type="protein sequence ID" value="ENSP00000333551.3"/>
    <property type="RefSeq nucleotide sequence ID" value="NM_007198.4"/>
    <property type="RefSeq protein sequence ID" value="NP_009129.1"/>
</dbReference>
<dbReference type="UCSC" id="uc003xkh.4">
    <property type="organism name" value="human"/>
</dbReference>
<dbReference type="AGR" id="HGNC:9457"/>
<dbReference type="CTD" id="11212"/>
<dbReference type="DisGeNET" id="11212"/>
<dbReference type="GeneCards" id="PLPBP"/>
<dbReference type="GeneReviews" id="PLPBP"/>
<dbReference type="HGNC" id="HGNC:9457">
    <property type="gene designation" value="PLPBP"/>
</dbReference>
<dbReference type="HPA" id="ENSG00000147471">
    <property type="expression patterns" value="Low tissue specificity"/>
</dbReference>
<dbReference type="MalaCards" id="PLPBP"/>
<dbReference type="MIM" id="604436">
    <property type="type" value="gene"/>
</dbReference>
<dbReference type="MIM" id="617290">
    <property type="type" value="phenotype"/>
</dbReference>
<dbReference type="neXtProt" id="NX_O94903"/>
<dbReference type="OpenTargets" id="ENSG00000147471"/>
<dbReference type="Orphanet" id="3006">
    <property type="disease" value="Pyridoxine-dependent-developmental and epileptic encephalopathy"/>
</dbReference>
<dbReference type="PharmGKB" id="PA33810"/>
<dbReference type="VEuPathDB" id="HostDB:ENSG00000147471"/>
<dbReference type="eggNOG" id="KOG3157">
    <property type="taxonomic scope" value="Eukaryota"/>
</dbReference>
<dbReference type="GeneTree" id="ENSGT00390000004928"/>
<dbReference type="HOGENOM" id="CLU_059988_2_1_1"/>
<dbReference type="InParanoid" id="O94903"/>
<dbReference type="OMA" id="PLEWHMI"/>
<dbReference type="OrthoDB" id="10264196at2759"/>
<dbReference type="PAN-GO" id="O94903">
    <property type="GO annotations" value="2 GO annotations based on evolutionary models"/>
</dbReference>
<dbReference type="PhylomeDB" id="O94903"/>
<dbReference type="TreeFam" id="TF314637"/>
<dbReference type="PathwayCommons" id="O94903"/>
<dbReference type="SignaLink" id="O94903"/>
<dbReference type="BioGRID-ORCS" id="11212">
    <property type="hits" value="15 hits in 1161 CRISPR screens"/>
</dbReference>
<dbReference type="CD-CODE" id="FB4E32DD">
    <property type="entry name" value="Presynaptic clusters and postsynaptic densities"/>
</dbReference>
<dbReference type="ChiTaRS" id="PROSC">
    <property type="organism name" value="human"/>
</dbReference>
<dbReference type="GeneWiki" id="PROSC"/>
<dbReference type="GenomeRNAi" id="11212"/>
<dbReference type="Pharos" id="O94903">
    <property type="development level" value="Tbio"/>
</dbReference>
<dbReference type="PRO" id="PR:O94903"/>
<dbReference type="Proteomes" id="UP000005640">
    <property type="component" value="Chromosome 8"/>
</dbReference>
<dbReference type="RNAct" id="O94903">
    <property type="molecule type" value="protein"/>
</dbReference>
<dbReference type="Bgee" id="ENSG00000147471">
    <property type="expression patterns" value="Expressed in cardia of stomach and 219 other cell types or tissues"/>
</dbReference>
<dbReference type="ExpressionAtlas" id="O94903">
    <property type="expression patterns" value="baseline and differential"/>
</dbReference>
<dbReference type="GO" id="GO:0005737">
    <property type="term" value="C:cytoplasm"/>
    <property type="evidence" value="ECO:0000318"/>
    <property type="project" value="GO_Central"/>
</dbReference>
<dbReference type="GO" id="GO:0005829">
    <property type="term" value="C:cytosol"/>
    <property type="evidence" value="ECO:0000314"/>
    <property type="project" value="HPA"/>
</dbReference>
<dbReference type="GO" id="GO:0005739">
    <property type="term" value="C:mitochondrion"/>
    <property type="evidence" value="ECO:0006056"/>
    <property type="project" value="FlyBase"/>
</dbReference>
<dbReference type="GO" id="GO:0030170">
    <property type="term" value="F:pyridoxal phosphate binding"/>
    <property type="evidence" value="ECO:0000318"/>
    <property type="project" value="GO_Central"/>
</dbReference>
<dbReference type="GO" id="GO:0042816">
    <property type="term" value="P:vitamin B6 metabolic process"/>
    <property type="evidence" value="ECO:0000318"/>
    <property type="project" value="GO_Central"/>
</dbReference>
<dbReference type="CDD" id="cd06822">
    <property type="entry name" value="PLPDE_III_YBL036c_euk"/>
    <property type="match status" value="1"/>
</dbReference>
<dbReference type="FunFam" id="3.20.20.10:FF:000007">
    <property type="entry name" value="Pyridoxal phosphate homeostasis protein"/>
    <property type="match status" value="1"/>
</dbReference>
<dbReference type="Gene3D" id="3.20.20.10">
    <property type="entry name" value="Alanine racemase"/>
    <property type="match status" value="1"/>
</dbReference>
<dbReference type="HAMAP" id="MF_02087">
    <property type="entry name" value="PLP_homeostasis"/>
    <property type="match status" value="1"/>
</dbReference>
<dbReference type="InterPro" id="IPR001608">
    <property type="entry name" value="Ala_racemase_N"/>
</dbReference>
<dbReference type="InterPro" id="IPR029066">
    <property type="entry name" value="PLP-binding_barrel"/>
</dbReference>
<dbReference type="InterPro" id="IPR011078">
    <property type="entry name" value="PyrdxlP_homeostasis"/>
</dbReference>
<dbReference type="NCBIfam" id="TIGR00044">
    <property type="entry name" value="YggS family pyridoxal phosphate-dependent enzyme"/>
    <property type="match status" value="1"/>
</dbReference>
<dbReference type="PANTHER" id="PTHR10146">
    <property type="entry name" value="PROLINE SYNTHETASE CO-TRANSCRIBED BACTERIAL HOMOLOG PROTEIN"/>
    <property type="match status" value="1"/>
</dbReference>
<dbReference type="PANTHER" id="PTHR10146:SF14">
    <property type="entry name" value="PYRIDOXAL PHOSPHATE HOMEOSTASIS PROTEIN"/>
    <property type="match status" value="1"/>
</dbReference>
<dbReference type="Pfam" id="PF01168">
    <property type="entry name" value="Ala_racemase_N"/>
    <property type="match status" value="1"/>
</dbReference>
<dbReference type="PIRSF" id="PIRSF004848">
    <property type="entry name" value="YBL036c_PLPDEIII"/>
    <property type="match status" value="1"/>
</dbReference>
<dbReference type="SUPFAM" id="SSF51419">
    <property type="entry name" value="PLP-binding barrel"/>
    <property type="match status" value="1"/>
</dbReference>
<dbReference type="PROSITE" id="PS01211">
    <property type="entry name" value="UPF0001"/>
    <property type="match status" value="1"/>
</dbReference>
<reference key="1">
    <citation type="journal article" date="1999" name="J. Hum. Genet.">
        <title>Cloning and characterization of human and mouse PROSC (proline synthetase co-transcribed) genes.</title>
        <authorList>
            <person name="Ikegawa S."/>
            <person name="Isomura M."/>
            <person name="Koshizuka Y."/>
            <person name="Nakamura Y."/>
        </authorList>
    </citation>
    <scope>NUCLEOTIDE SEQUENCE [GENOMIC DNA]</scope>
</reference>
<reference key="2">
    <citation type="journal article" date="2001" name="Genome Res.">
        <title>Towards a catalog of human genes and proteins: sequencing and analysis of 500 novel complete protein coding human cDNAs.</title>
        <authorList>
            <person name="Wiemann S."/>
            <person name="Weil B."/>
            <person name="Wellenreuther R."/>
            <person name="Gassenhuber J."/>
            <person name="Glassl S."/>
            <person name="Ansorge W."/>
            <person name="Boecher M."/>
            <person name="Bloecker H."/>
            <person name="Bauersachs S."/>
            <person name="Blum H."/>
            <person name="Lauber J."/>
            <person name="Duesterhoeft A."/>
            <person name="Beyer A."/>
            <person name="Koehrer K."/>
            <person name="Strack N."/>
            <person name="Mewes H.-W."/>
            <person name="Ottenwaelder B."/>
            <person name="Obermaier B."/>
            <person name="Tampe J."/>
            <person name="Heubner D."/>
            <person name="Wambutt R."/>
            <person name="Korn B."/>
            <person name="Klein M."/>
            <person name="Poustka A."/>
        </authorList>
    </citation>
    <scope>NUCLEOTIDE SEQUENCE [LARGE SCALE MRNA]</scope>
    <source>
        <tissue>Brain</tissue>
    </source>
</reference>
<reference key="3">
    <citation type="submission" date="2004-06" db="EMBL/GenBank/DDBJ databases">
        <title>Cloning of human full open reading frames in Gateway(TM) system entry vector (pDONR201).</title>
        <authorList>
            <person name="Ebert L."/>
            <person name="Schick M."/>
            <person name="Neubert P."/>
            <person name="Schatten R."/>
            <person name="Henze S."/>
            <person name="Korn B."/>
        </authorList>
    </citation>
    <scope>NUCLEOTIDE SEQUENCE [LARGE SCALE MRNA]</scope>
</reference>
<reference key="4">
    <citation type="journal article" date="2004" name="Genome Res.">
        <title>The status, quality, and expansion of the NIH full-length cDNA project: the Mammalian Gene Collection (MGC).</title>
        <authorList>
            <consortium name="The MGC Project Team"/>
        </authorList>
    </citation>
    <scope>NUCLEOTIDE SEQUENCE [LARGE SCALE MRNA]</scope>
    <source>
        <tissue>Placenta</tissue>
    </source>
</reference>
<reference key="5">
    <citation type="journal article" date="2011" name="BMC Syst. Biol.">
        <title>Initial characterization of the human central proteome.</title>
        <authorList>
            <person name="Burkard T.R."/>
            <person name="Planyavsky M."/>
            <person name="Kaupe I."/>
            <person name="Breitwieser F.P."/>
            <person name="Buerckstuemmer T."/>
            <person name="Bennett K.L."/>
            <person name="Superti-Furga G."/>
            <person name="Colinge J."/>
        </authorList>
    </citation>
    <scope>IDENTIFICATION BY MASS SPECTROMETRY [LARGE SCALE ANALYSIS]</scope>
</reference>
<reference key="6">
    <citation type="journal article" date="2013" name="J. Proteome Res.">
        <title>Toward a comprehensive characterization of a human cancer cell phosphoproteome.</title>
        <authorList>
            <person name="Zhou H."/>
            <person name="Di Palma S."/>
            <person name="Preisinger C."/>
            <person name="Peng M."/>
            <person name="Polat A.N."/>
            <person name="Heck A.J."/>
            <person name="Mohammed S."/>
        </authorList>
    </citation>
    <scope>PHOSPHORYLATION [LARGE SCALE ANALYSIS] AT SER-6 AND SER-244</scope>
    <scope>IDENTIFICATION BY MASS SPECTROMETRY [LARGE SCALE ANALYSIS]</scope>
    <source>
        <tissue>Cervix carcinoma</tissue>
        <tissue>Erythroleukemia</tissue>
    </source>
</reference>
<reference key="7">
    <citation type="journal article" date="2014" name="J. Proteomics">
        <title>An enzyme assisted RP-RPLC approach for in-depth analysis of human liver phosphoproteome.</title>
        <authorList>
            <person name="Bian Y."/>
            <person name="Song C."/>
            <person name="Cheng K."/>
            <person name="Dong M."/>
            <person name="Wang F."/>
            <person name="Huang J."/>
            <person name="Sun D."/>
            <person name="Wang L."/>
            <person name="Ye M."/>
            <person name="Zou H."/>
        </authorList>
    </citation>
    <scope>PHOSPHORYLATION [LARGE SCALE ANALYSIS] AT SER-226 AND SER-244</scope>
    <scope>IDENTIFICATION BY MASS SPECTROMETRY [LARGE SCALE ANALYSIS]</scope>
    <source>
        <tissue>Liver</tissue>
    </source>
</reference>
<reference key="8">
    <citation type="journal article" date="2015" name="Proteomics">
        <title>N-terminome analysis of the human mitochondrial proteome.</title>
        <authorList>
            <person name="Vaca Jacome A.S."/>
            <person name="Rabilloud T."/>
            <person name="Schaeffer-Reiss C."/>
            <person name="Rompais M."/>
            <person name="Ayoub D."/>
            <person name="Lane L."/>
            <person name="Bairoch A."/>
            <person name="Van Dorsselaer A."/>
            <person name="Carapito C."/>
        </authorList>
    </citation>
    <scope>IDENTIFICATION BY MASS SPECTROMETRY [LARGE SCALE ANALYSIS]</scope>
</reference>
<reference key="9">
    <citation type="journal article" date="2016" name="Am. J. Hum. Genet.">
        <title>Mutations in PROSC disrupt cellular pyridoxal phosphate homeostasis and cause vitamin-B6-dependent epilepsy.</title>
        <authorList>
            <person name="Darin N."/>
            <person name="Reid E."/>
            <person name="Prunetti L."/>
            <person name="Samuelsson L."/>
            <person name="Husain R.A."/>
            <person name="Wilson M."/>
            <person name="El Yacoubi B."/>
            <person name="Footitt E."/>
            <person name="Chong W.K."/>
            <person name="Wilson L.C."/>
            <person name="Prunty H."/>
            <person name="Pope S."/>
            <person name="Heales S."/>
            <person name="Lascelles K."/>
            <person name="Champion M."/>
            <person name="Wassmer E."/>
            <person name="Veggiotti P."/>
            <person name="de Crecy-Lagard V."/>
            <person name="Mills P.B."/>
            <person name="Clayton P.T."/>
        </authorList>
    </citation>
    <scope>INVOLVEMENT IN EPEO1</scope>
    <scope>FUNCTION</scope>
    <scope>VARIANTS EPEO1 71-GLN--HIS-275 DEL; 78-SER--HIS-275 DEL; LEU-87; PRO-175 AND GLN-241</scope>
    <scope>CHARACTERIZATION OF VARIANTS EPEO1 78-SER--HIS-275 DEL AND PRO-175</scope>
</reference>
<organism>
    <name type="scientific">Homo sapiens</name>
    <name type="common">Human</name>
    <dbReference type="NCBI Taxonomy" id="9606"/>
    <lineage>
        <taxon>Eukaryota</taxon>
        <taxon>Metazoa</taxon>
        <taxon>Chordata</taxon>
        <taxon>Craniata</taxon>
        <taxon>Vertebrata</taxon>
        <taxon>Euteleostomi</taxon>
        <taxon>Mammalia</taxon>
        <taxon>Eutheria</taxon>
        <taxon>Euarchontoglires</taxon>
        <taxon>Primates</taxon>
        <taxon>Haplorrhini</taxon>
        <taxon>Catarrhini</taxon>
        <taxon>Hominidae</taxon>
        <taxon>Homo</taxon>
    </lineage>
</organism>
<protein>
    <recommendedName>
        <fullName evidence="2">Pyridoxal phosphate homeostasis protein</fullName>
        <shortName evidence="2">PLP homeostasis protein</shortName>
    </recommendedName>
    <alternativeName>
        <fullName evidence="2">Proline synthase co-transcribed bacterial homolog protein</fullName>
    </alternativeName>
    <alternativeName>
        <fullName evidence="5">Pyridoxal phosphate-binding protein</fullName>
    </alternativeName>
</protein>
<gene>
    <name evidence="2 5" type="primary">PLPBP</name>
    <name evidence="2 5" type="synonym">PROSC</name>
</gene>
<proteinExistence type="evidence at protein level"/>
<sequence length="275" mass="30344">MWRAGSMSAELGVGCALRAVNERVQQAVARRPRDLPAIQPRLVAVSKTKPADMVIEAYGHGQRTFGENYVQELLEKASNPKILSLCPEIKWHFIGHLQKQNVNKLMAVPNLFMLETVDSVKLADKVNSSWQRKGSPERLKVMVQINTSGEESKHGLPPSETIAIVEHINAKCPNLEFVGLMTIGSFGHDLSQGPNPDFQLLLSLREELCKKLNIPADQVELSMGMSADFQHAVEVGSTNVRIGSTIFGERDYSKKPTPDKCAADVKAPLEVAQEH</sequence>
<name>PLPHP_HUMAN</name>